<protein>
    <recommendedName>
        <fullName>Hypothalamic heptapeptide</fullName>
    </recommendedName>
</protein>
<feature type="peptide" id="PRO_0000044148" description="Hypothalamic heptapeptide">
    <location>
        <begin position="1"/>
        <end position="7"/>
    </location>
</feature>
<keyword id="KW-0903">Direct protein sequencing</keyword>
<keyword id="KW-1185">Reference proteome</keyword>
<accession>P01153</accession>
<sequence length="7" mass="957">FIYHSYK</sequence>
<dbReference type="PIR" id="A01417">
    <property type="entry name" value="NYPG7"/>
</dbReference>
<dbReference type="Allergome" id="9625">
    <property type="allergen name" value="Sus s ACTH"/>
</dbReference>
<dbReference type="InParanoid" id="P01153"/>
<dbReference type="Proteomes" id="UP000008227">
    <property type="component" value="Unplaced"/>
</dbReference>
<dbReference type="Proteomes" id="UP000314985">
    <property type="component" value="Unplaced"/>
</dbReference>
<dbReference type="Proteomes" id="UP000694570">
    <property type="component" value="Unplaced"/>
</dbReference>
<dbReference type="Proteomes" id="UP000694571">
    <property type="component" value="Unplaced"/>
</dbReference>
<dbReference type="Proteomes" id="UP000694720">
    <property type="component" value="Unplaced"/>
</dbReference>
<dbReference type="Proteomes" id="UP000694722">
    <property type="component" value="Unplaced"/>
</dbReference>
<dbReference type="Proteomes" id="UP000694723">
    <property type="component" value="Unplaced"/>
</dbReference>
<dbReference type="Proteomes" id="UP000694724">
    <property type="component" value="Unplaced"/>
</dbReference>
<dbReference type="Proteomes" id="UP000694725">
    <property type="component" value="Unplaced"/>
</dbReference>
<dbReference type="Proteomes" id="UP000694726">
    <property type="component" value="Unplaced"/>
</dbReference>
<dbReference type="Proteomes" id="UP000694727">
    <property type="component" value="Unplaced"/>
</dbReference>
<dbReference type="Proteomes" id="UP000694728">
    <property type="component" value="Unplaced"/>
</dbReference>
<organism>
    <name type="scientific">Sus scrofa</name>
    <name type="common">Pig</name>
    <dbReference type="NCBI Taxonomy" id="9823"/>
    <lineage>
        <taxon>Eukaryota</taxon>
        <taxon>Metazoa</taxon>
        <taxon>Chordata</taxon>
        <taxon>Craniata</taxon>
        <taxon>Vertebrata</taxon>
        <taxon>Euteleostomi</taxon>
        <taxon>Mammalia</taxon>
        <taxon>Eutheria</taxon>
        <taxon>Laurasiatheria</taxon>
        <taxon>Artiodactyla</taxon>
        <taxon>Suina</taxon>
        <taxon>Suidae</taxon>
        <taxon>Sus</taxon>
    </lineage>
</organism>
<reference key="1">
    <citation type="journal article" date="1981" name="Horm. Metab. Res.">
        <title>Isolation, structure and synthesis of a heptapeptide with in vitro ACTH-releasing activity from porcine hypothalamus.</title>
        <authorList>
            <person name="Chang R.C.C."/>
            <person name="Huang W.-Y."/>
            <person name="Arimura A."/>
            <person name="Redding T.W."/>
            <person name="Coy D.H."/>
            <person name="Saffran M."/>
            <person name="Kong A."/>
            <person name="Hamilton J.W."/>
            <person name="Cohn D.V."/>
            <person name="Schally A.V."/>
        </authorList>
    </citation>
    <scope>PROTEIN SEQUENCE</scope>
    <scope>SYNTHESIS</scope>
</reference>
<name>HY7_PIG</name>
<proteinExistence type="evidence at protein level"/>